<dbReference type="EMBL" id="AF013763">
    <property type="protein sequence ID" value="AAB69335.1"/>
    <property type="molecule type" value="Genomic_DNA"/>
</dbReference>
<dbReference type="RefSeq" id="YP_003002018.1">
    <property type="nucleotide sequence ID" value="NC_012897.1"/>
</dbReference>
<dbReference type="SMR" id="O20645"/>
<dbReference type="GeneID" id="8097182"/>
<dbReference type="CTD" id="4519"/>
<dbReference type="GO" id="GO:0005743">
    <property type="term" value="C:mitochondrial inner membrane"/>
    <property type="evidence" value="ECO:0007669"/>
    <property type="project" value="UniProtKB-SubCell"/>
</dbReference>
<dbReference type="GO" id="GO:0045275">
    <property type="term" value="C:respiratory chain complex III"/>
    <property type="evidence" value="ECO:0007669"/>
    <property type="project" value="InterPro"/>
</dbReference>
<dbReference type="GO" id="GO:0046872">
    <property type="term" value="F:metal ion binding"/>
    <property type="evidence" value="ECO:0007669"/>
    <property type="project" value="UniProtKB-KW"/>
</dbReference>
<dbReference type="GO" id="GO:0008121">
    <property type="term" value="F:ubiquinol-cytochrome-c reductase activity"/>
    <property type="evidence" value="ECO:0007669"/>
    <property type="project" value="InterPro"/>
</dbReference>
<dbReference type="GO" id="GO:0006122">
    <property type="term" value="P:mitochondrial electron transport, ubiquinol to cytochrome c"/>
    <property type="evidence" value="ECO:0007669"/>
    <property type="project" value="TreeGrafter"/>
</dbReference>
<dbReference type="CDD" id="cd00290">
    <property type="entry name" value="cytochrome_b_C"/>
    <property type="match status" value="1"/>
</dbReference>
<dbReference type="CDD" id="cd00284">
    <property type="entry name" value="Cytochrome_b_N"/>
    <property type="match status" value="1"/>
</dbReference>
<dbReference type="FunFam" id="1.20.810.10:FF:000002">
    <property type="entry name" value="Cytochrome b"/>
    <property type="match status" value="1"/>
</dbReference>
<dbReference type="Gene3D" id="1.20.810.10">
    <property type="entry name" value="Cytochrome Bc1 Complex, Chain C"/>
    <property type="match status" value="1"/>
</dbReference>
<dbReference type="InterPro" id="IPR005798">
    <property type="entry name" value="Cyt_b/b6_C"/>
</dbReference>
<dbReference type="InterPro" id="IPR036150">
    <property type="entry name" value="Cyt_b/b6_C_sf"/>
</dbReference>
<dbReference type="InterPro" id="IPR005797">
    <property type="entry name" value="Cyt_b/b6_N"/>
</dbReference>
<dbReference type="InterPro" id="IPR027387">
    <property type="entry name" value="Cytb/b6-like_sf"/>
</dbReference>
<dbReference type="InterPro" id="IPR030689">
    <property type="entry name" value="Cytochrome_b"/>
</dbReference>
<dbReference type="InterPro" id="IPR048260">
    <property type="entry name" value="Cytochrome_b_C_euk/bac"/>
</dbReference>
<dbReference type="InterPro" id="IPR048259">
    <property type="entry name" value="Cytochrome_b_N_euk/bac"/>
</dbReference>
<dbReference type="InterPro" id="IPR016174">
    <property type="entry name" value="Di-haem_cyt_TM"/>
</dbReference>
<dbReference type="PANTHER" id="PTHR19271">
    <property type="entry name" value="CYTOCHROME B"/>
    <property type="match status" value="1"/>
</dbReference>
<dbReference type="PANTHER" id="PTHR19271:SF16">
    <property type="entry name" value="CYTOCHROME B"/>
    <property type="match status" value="1"/>
</dbReference>
<dbReference type="Pfam" id="PF00032">
    <property type="entry name" value="Cytochrom_B_C"/>
    <property type="match status" value="1"/>
</dbReference>
<dbReference type="Pfam" id="PF00033">
    <property type="entry name" value="Cytochrome_B"/>
    <property type="match status" value="1"/>
</dbReference>
<dbReference type="PIRSF" id="PIRSF038885">
    <property type="entry name" value="COB"/>
    <property type="match status" value="1"/>
</dbReference>
<dbReference type="SUPFAM" id="SSF81648">
    <property type="entry name" value="a domain/subunit of cytochrome bc1 complex (Ubiquinol-cytochrome c reductase)"/>
    <property type="match status" value="1"/>
</dbReference>
<dbReference type="SUPFAM" id="SSF81342">
    <property type="entry name" value="Transmembrane di-heme cytochromes"/>
    <property type="match status" value="1"/>
</dbReference>
<dbReference type="PROSITE" id="PS51003">
    <property type="entry name" value="CYTB_CTER"/>
    <property type="match status" value="1"/>
</dbReference>
<dbReference type="PROSITE" id="PS51002">
    <property type="entry name" value="CYTB_NTER"/>
    <property type="match status" value="1"/>
</dbReference>
<organism>
    <name type="scientific">Pavo muticus</name>
    <name type="common">Green peafowl</name>
    <dbReference type="NCBI Taxonomy" id="9050"/>
    <lineage>
        <taxon>Eukaryota</taxon>
        <taxon>Metazoa</taxon>
        <taxon>Chordata</taxon>
        <taxon>Craniata</taxon>
        <taxon>Vertebrata</taxon>
        <taxon>Euteleostomi</taxon>
        <taxon>Archelosauria</taxon>
        <taxon>Archosauria</taxon>
        <taxon>Dinosauria</taxon>
        <taxon>Saurischia</taxon>
        <taxon>Theropoda</taxon>
        <taxon>Coelurosauria</taxon>
        <taxon>Aves</taxon>
        <taxon>Neognathae</taxon>
        <taxon>Galloanserae</taxon>
        <taxon>Galliformes</taxon>
        <taxon>Phasianidae</taxon>
        <taxon>Phasianinae</taxon>
        <taxon>Pavo</taxon>
    </lineage>
</organism>
<protein>
    <recommendedName>
        <fullName>Cytochrome b</fullName>
    </recommendedName>
    <alternativeName>
        <fullName>Complex III subunit 3</fullName>
    </alternativeName>
    <alternativeName>
        <fullName>Complex III subunit III</fullName>
    </alternativeName>
    <alternativeName>
        <fullName>Cytochrome b-c1 complex subunit 3</fullName>
    </alternativeName>
    <alternativeName>
        <fullName>Ubiquinol-cytochrome-c reductase complex cytochrome b subunit</fullName>
    </alternativeName>
</protein>
<evidence type="ECO:0000250" key="1"/>
<evidence type="ECO:0000250" key="2">
    <source>
        <dbReference type="UniProtKB" id="P00157"/>
    </source>
</evidence>
<evidence type="ECO:0000255" key="3">
    <source>
        <dbReference type="PROSITE-ProRule" id="PRU00967"/>
    </source>
</evidence>
<evidence type="ECO:0000255" key="4">
    <source>
        <dbReference type="PROSITE-ProRule" id="PRU00968"/>
    </source>
</evidence>
<sequence>MAPNIRKSHPLLKMINNSLIDLPAPSNISAWWNFGSLLAVCLATQIITGLLLAMHYTADTSLAFSSVAHTCRNVQYGWLIRNLHANGASFFFICIFLHIGRGLYYGSYLYKETWNTGVVLLLTLMATAFVGYVLPWGQMSFWGATVITNLFSAIPYIGQTLVEWAWGGFSVDNPTLTRFFALHFLLPFVIAGITIIHLTFLHESGSNNPLGISSNSDKIPFHPYYSLKDILGLTLMFIPFLTLALFSPNLLGDPENFTPANPLVTPPHIKPEWYFLFAYAILRSIPNKLGGVLALAASVLILLLIPFLHKSKQRTMTFRPLSQILFWLLVANLLILTWIGSQPVEHPFIIIGQMASFSYFSILLILFPAIGTLENKMLNH</sequence>
<feature type="chain" id="PRO_0000061362" description="Cytochrome b">
    <location>
        <begin position="1"/>
        <end position="380"/>
    </location>
</feature>
<feature type="transmembrane region" description="Helical" evidence="2">
    <location>
        <begin position="34"/>
        <end position="54"/>
    </location>
</feature>
<feature type="transmembrane region" description="Helical" evidence="2">
    <location>
        <begin position="78"/>
        <end position="99"/>
    </location>
</feature>
<feature type="transmembrane region" description="Helical" evidence="2">
    <location>
        <begin position="114"/>
        <end position="134"/>
    </location>
</feature>
<feature type="transmembrane region" description="Helical" evidence="2">
    <location>
        <begin position="179"/>
        <end position="199"/>
    </location>
</feature>
<feature type="transmembrane region" description="Helical" evidence="2">
    <location>
        <begin position="227"/>
        <end position="247"/>
    </location>
</feature>
<feature type="transmembrane region" description="Helical" evidence="2">
    <location>
        <begin position="289"/>
        <end position="309"/>
    </location>
</feature>
<feature type="transmembrane region" description="Helical" evidence="2">
    <location>
        <begin position="321"/>
        <end position="341"/>
    </location>
</feature>
<feature type="transmembrane region" description="Helical" evidence="2">
    <location>
        <begin position="348"/>
        <end position="368"/>
    </location>
</feature>
<feature type="binding site" description="axial binding residue" evidence="2">
    <location>
        <position position="84"/>
    </location>
    <ligand>
        <name>heme b</name>
        <dbReference type="ChEBI" id="CHEBI:60344"/>
        <label>b562</label>
    </ligand>
    <ligandPart>
        <name>Fe</name>
        <dbReference type="ChEBI" id="CHEBI:18248"/>
    </ligandPart>
</feature>
<feature type="binding site" description="axial binding residue" evidence="2">
    <location>
        <position position="98"/>
    </location>
    <ligand>
        <name>heme b</name>
        <dbReference type="ChEBI" id="CHEBI:60344"/>
        <label>b566</label>
    </ligand>
    <ligandPart>
        <name>Fe</name>
        <dbReference type="ChEBI" id="CHEBI:18248"/>
    </ligandPart>
</feature>
<feature type="binding site" description="axial binding residue" evidence="2">
    <location>
        <position position="183"/>
    </location>
    <ligand>
        <name>heme b</name>
        <dbReference type="ChEBI" id="CHEBI:60344"/>
        <label>b562</label>
    </ligand>
    <ligandPart>
        <name>Fe</name>
        <dbReference type="ChEBI" id="CHEBI:18248"/>
    </ligandPart>
</feature>
<feature type="binding site" description="axial binding residue" evidence="2">
    <location>
        <position position="197"/>
    </location>
    <ligand>
        <name>heme b</name>
        <dbReference type="ChEBI" id="CHEBI:60344"/>
        <label>b566</label>
    </ligand>
    <ligandPart>
        <name>Fe</name>
        <dbReference type="ChEBI" id="CHEBI:18248"/>
    </ligandPart>
</feature>
<feature type="binding site" evidence="2">
    <location>
        <position position="202"/>
    </location>
    <ligand>
        <name>a ubiquinone</name>
        <dbReference type="ChEBI" id="CHEBI:16389"/>
    </ligand>
</feature>
<proteinExistence type="inferred from homology"/>
<accession>O20645</accession>
<keyword id="KW-0249">Electron transport</keyword>
<keyword id="KW-0349">Heme</keyword>
<keyword id="KW-0408">Iron</keyword>
<keyword id="KW-0472">Membrane</keyword>
<keyword id="KW-0479">Metal-binding</keyword>
<keyword id="KW-0496">Mitochondrion</keyword>
<keyword id="KW-0999">Mitochondrion inner membrane</keyword>
<keyword id="KW-0679">Respiratory chain</keyword>
<keyword id="KW-0812">Transmembrane</keyword>
<keyword id="KW-1133">Transmembrane helix</keyword>
<keyword id="KW-0813">Transport</keyword>
<keyword id="KW-0830">Ubiquinone</keyword>
<gene>
    <name type="primary">MT-CYB</name>
    <name type="synonym">COB</name>
    <name type="synonym">CYTB</name>
    <name type="synonym">MTCYB</name>
</gene>
<geneLocation type="mitochondrion"/>
<comment type="function">
    <text evidence="2">Component of the ubiquinol-cytochrome c reductase complex (complex III or cytochrome b-c1 complex) that is part of the mitochondrial respiratory chain. The b-c1 complex mediates electron transfer from ubiquinol to cytochrome c. Contributes to the generation of a proton gradient across the mitochondrial membrane that is then used for ATP synthesis.</text>
</comment>
<comment type="cofactor">
    <cofactor evidence="2">
        <name>heme b</name>
        <dbReference type="ChEBI" id="CHEBI:60344"/>
    </cofactor>
    <text evidence="2">Binds 2 heme b groups non-covalently.</text>
</comment>
<comment type="subunit">
    <text evidence="2">The cytochrome bc1 complex contains 11 subunits: 3 respiratory subunits (MT-CYB, CYC1 and UQCRFS1), 2 core proteins (UQCRC1 and UQCRC2) and 6 low-molecular weight proteins (UQCRH/QCR6, UQCRB/QCR7, UQCRQ/QCR8, UQCR10/QCR9, UQCR11/QCR10 and a cleavage product of UQCRFS1). This cytochrome bc1 complex then forms a dimer.</text>
</comment>
<comment type="subcellular location">
    <subcellularLocation>
        <location evidence="2">Mitochondrion inner membrane</location>
        <topology evidence="2">Multi-pass membrane protein</topology>
    </subcellularLocation>
</comment>
<comment type="miscellaneous">
    <text evidence="1">Heme 1 (or BL or b562) is low-potential and absorbs at about 562 nm, and heme 2 (or BH or b566) is high-potential and absorbs at about 566 nm.</text>
</comment>
<comment type="similarity">
    <text evidence="3 4">Belongs to the cytochrome b family.</text>
</comment>
<comment type="caution">
    <text evidence="2">The full-length protein contains only eight transmembrane helices, not nine as predicted by bioinformatics tools.</text>
</comment>
<reference key="1">
    <citation type="journal article" date="1999" name="Mol. Phylogenet. Evol.">
        <title>A molecular phylogeny of the pheasants and partridges suggests that these lineages are not monophyletic.</title>
        <authorList>
            <person name="Kimball R.T."/>
            <person name="Braun E.L."/>
            <person name="Zwartjes P.W."/>
            <person name="Crowe T.M."/>
            <person name="Ligon J.D."/>
        </authorList>
    </citation>
    <scope>NUCLEOTIDE SEQUENCE [GENOMIC DNA]</scope>
    <source>
        <tissue>Blood</tissue>
    </source>
</reference>
<name>CYB_PAVMU</name>